<organism>
    <name type="scientific">Campylobacter jejuni (strain RM1221)</name>
    <dbReference type="NCBI Taxonomy" id="195099"/>
    <lineage>
        <taxon>Bacteria</taxon>
        <taxon>Pseudomonadati</taxon>
        <taxon>Campylobacterota</taxon>
        <taxon>Epsilonproteobacteria</taxon>
        <taxon>Campylobacterales</taxon>
        <taxon>Campylobacteraceae</taxon>
        <taxon>Campylobacter</taxon>
    </lineage>
</organism>
<keyword id="KW-0963">Cytoplasm</keyword>
<keyword id="KW-0671">Queuosine biosynthesis</keyword>
<keyword id="KW-0949">S-adenosyl-L-methionine</keyword>
<keyword id="KW-0808">Transferase</keyword>
<evidence type="ECO:0000255" key="1">
    <source>
        <dbReference type="HAMAP-Rule" id="MF_00113"/>
    </source>
</evidence>
<reference key="1">
    <citation type="journal article" date="2005" name="PLoS Biol.">
        <title>Major structural differences and novel potential virulence mechanisms from the genomes of multiple Campylobacter species.</title>
        <authorList>
            <person name="Fouts D.E."/>
            <person name="Mongodin E.F."/>
            <person name="Mandrell R.E."/>
            <person name="Miller W.G."/>
            <person name="Rasko D.A."/>
            <person name="Ravel J."/>
            <person name="Brinkac L.M."/>
            <person name="DeBoy R.T."/>
            <person name="Parker C.T."/>
            <person name="Daugherty S.C."/>
            <person name="Dodson R.J."/>
            <person name="Durkin A.S."/>
            <person name="Madupu R."/>
            <person name="Sullivan S.A."/>
            <person name="Shetty J.U."/>
            <person name="Ayodeji M.A."/>
            <person name="Shvartsbeyn A."/>
            <person name="Schatz M.C."/>
            <person name="Badger J.H."/>
            <person name="Fraser C.M."/>
            <person name="Nelson K.E."/>
        </authorList>
    </citation>
    <scope>NUCLEOTIDE SEQUENCE [LARGE SCALE GENOMIC DNA]</scope>
    <source>
        <strain>RM1221</strain>
    </source>
</reference>
<gene>
    <name evidence="1" type="primary">queA</name>
    <name type="ordered locus">CJE0680</name>
</gene>
<comment type="function">
    <text evidence="1">Transfers and isomerizes the ribose moiety from AdoMet to the 7-aminomethyl group of 7-deazaguanine (preQ1-tRNA) to give epoxyqueuosine (oQ-tRNA).</text>
</comment>
<comment type="catalytic activity">
    <reaction evidence="1">
        <text>7-aminomethyl-7-carbaguanosine(34) in tRNA + S-adenosyl-L-methionine = epoxyqueuosine(34) in tRNA + adenine + L-methionine + 2 H(+)</text>
        <dbReference type="Rhea" id="RHEA:32155"/>
        <dbReference type="Rhea" id="RHEA-COMP:10342"/>
        <dbReference type="Rhea" id="RHEA-COMP:18582"/>
        <dbReference type="ChEBI" id="CHEBI:15378"/>
        <dbReference type="ChEBI" id="CHEBI:16708"/>
        <dbReference type="ChEBI" id="CHEBI:57844"/>
        <dbReference type="ChEBI" id="CHEBI:59789"/>
        <dbReference type="ChEBI" id="CHEBI:82833"/>
        <dbReference type="ChEBI" id="CHEBI:194443"/>
        <dbReference type="EC" id="2.4.99.17"/>
    </reaction>
</comment>
<comment type="pathway">
    <text evidence="1">tRNA modification; tRNA-queuosine biosynthesis.</text>
</comment>
<comment type="subunit">
    <text evidence="1">Monomer.</text>
</comment>
<comment type="subcellular location">
    <subcellularLocation>
        <location evidence="1">Cytoplasm</location>
    </subcellularLocation>
</comment>
<comment type="similarity">
    <text evidence="1">Belongs to the QueA family.</text>
</comment>
<protein>
    <recommendedName>
        <fullName evidence="1">S-adenosylmethionine:tRNA ribosyltransferase-isomerase</fullName>
        <ecNumber evidence="1">2.4.99.17</ecNumber>
    </recommendedName>
    <alternativeName>
        <fullName evidence="1">Queuosine biosynthesis protein QueA</fullName>
    </alternativeName>
</protein>
<dbReference type="EC" id="2.4.99.17" evidence="1"/>
<dbReference type="EMBL" id="CP000025">
    <property type="protein sequence ID" value="AAW35810.1"/>
    <property type="molecule type" value="Genomic_DNA"/>
</dbReference>
<dbReference type="RefSeq" id="WP_002870115.1">
    <property type="nucleotide sequence ID" value="NC_003912.7"/>
</dbReference>
<dbReference type="SMR" id="Q5HVJ3"/>
<dbReference type="KEGG" id="cjr:CJE0680"/>
<dbReference type="HOGENOM" id="CLU_039110_1_0_7"/>
<dbReference type="UniPathway" id="UPA00392"/>
<dbReference type="GO" id="GO:0005737">
    <property type="term" value="C:cytoplasm"/>
    <property type="evidence" value="ECO:0007669"/>
    <property type="project" value="UniProtKB-SubCell"/>
</dbReference>
<dbReference type="GO" id="GO:0051075">
    <property type="term" value="F:S-adenosylmethionine:tRNA ribosyltransferase-isomerase activity"/>
    <property type="evidence" value="ECO:0007669"/>
    <property type="project" value="UniProtKB-EC"/>
</dbReference>
<dbReference type="GO" id="GO:0008616">
    <property type="term" value="P:queuosine biosynthetic process"/>
    <property type="evidence" value="ECO:0007669"/>
    <property type="project" value="UniProtKB-UniRule"/>
</dbReference>
<dbReference type="GO" id="GO:0002099">
    <property type="term" value="P:tRNA wobble guanine modification"/>
    <property type="evidence" value="ECO:0007669"/>
    <property type="project" value="TreeGrafter"/>
</dbReference>
<dbReference type="Gene3D" id="2.40.10.240">
    <property type="entry name" value="QueA-like"/>
    <property type="match status" value="1"/>
</dbReference>
<dbReference type="Gene3D" id="3.40.1780.10">
    <property type="entry name" value="QueA-like"/>
    <property type="match status" value="1"/>
</dbReference>
<dbReference type="HAMAP" id="MF_00113">
    <property type="entry name" value="QueA"/>
    <property type="match status" value="1"/>
</dbReference>
<dbReference type="InterPro" id="IPR003699">
    <property type="entry name" value="QueA"/>
</dbReference>
<dbReference type="InterPro" id="IPR042118">
    <property type="entry name" value="QueA_dom1"/>
</dbReference>
<dbReference type="InterPro" id="IPR042119">
    <property type="entry name" value="QueA_dom2"/>
</dbReference>
<dbReference type="InterPro" id="IPR036100">
    <property type="entry name" value="QueA_sf"/>
</dbReference>
<dbReference type="NCBIfam" id="NF001140">
    <property type="entry name" value="PRK00147.1"/>
    <property type="match status" value="1"/>
</dbReference>
<dbReference type="NCBIfam" id="TIGR00113">
    <property type="entry name" value="queA"/>
    <property type="match status" value="1"/>
</dbReference>
<dbReference type="PANTHER" id="PTHR30307">
    <property type="entry name" value="S-ADENOSYLMETHIONINE:TRNA RIBOSYLTRANSFERASE-ISOMERASE"/>
    <property type="match status" value="1"/>
</dbReference>
<dbReference type="PANTHER" id="PTHR30307:SF0">
    <property type="entry name" value="S-ADENOSYLMETHIONINE:TRNA RIBOSYLTRANSFERASE-ISOMERASE"/>
    <property type="match status" value="1"/>
</dbReference>
<dbReference type="Pfam" id="PF02547">
    <property type="entry name" value="Queuosine_synth"/>
    <property type="match status" value="1"/>
</dbReference>
<dbReference type="SUPFAM" id="SSF111337">
    <property type="entry name" value="QueA-like"/>
    <property type="match status" value="1"/>
</dbReference>
<name>QUEA_CAMJR</name>
<proteinExistence type="inferred from homology"/>
<feature type="chain" id="PRO_1000094761" description="S-adenosylmethionine:tRNA ribosyltransferase-isomerase">
    <location>
        <begin position="1"/>
        <end position="342"/>
    </location>
</feature>
<accession>Q5HVJ3</accession>
<sequence length="342" mass="39570">MNKDLLLSSYDYTLANELIANYPTNPKEDARLLVFDRKNKEIFHTTFKNLQDFLPNCAIFFNDTKVIKARIYGNKASGGKIELFLHQPFLNSHDPLFLAQIKGRVKKDEILYFKDDLKVRVVELLNDGLRKVQFFQNDKTLDTSNLYNLLDKIGHIPLPPYIKREDEKSDLKDYQSIFAKNLGAVAAPTASLHFSETMLENLRKKHEIYHLTLHVGAGTFKSVECENIQEHKMHSEFFNIPQQACEIIDSKQAILGVGTTVTRTIEYYARTKTKNGFCDLFLHPQNPPIRQNHLLTNFHLPKSTLIMLVSAFIGREQCLKLYELAIKEKYRFYSYGDAMLIL</sequence>